<reference key="1">
    <citation type="journal article" date="2000" name="Cancer Res.">
        <title>Mitomycin C resistance induced by TCF-3 overexpression in gastric cancer cell line MKN28 is associated with DT-diaphorase down-regulation.</title>
        <authorList>
            <person name="Sagara N."/>
            <person name="Katoh M."/>
        </authorList>
    </citation>
    <scope>NUCLEOTIDE SEQUENCE [MRNA]</scope>
    <source>
        <tissue>Fetal lung</tissue>
    </source>
</reference>
<reference key="2">
    <citation type="journal article" date="2005" name="Nature">
        <title>Generation and annotation of the DNA sequences of human chromosomes 2 and 4.</title>
        <authorList>
            <person name="Hillier L.W."/>
            <person name="Graves T.A."/>
            <person name="Fulton R.S."/>
            <person name="Fulton L.A."/>
            <person name="Pepin K.H."/>
            <person name="Minx P."/>
            <person name="Wagner-McPherson C."/>
            <person name="Layman D."/>
            <person name="Wylie K."/>
            <person name="Sekhon M."/>
            <person name="Becker M.C."/>
            <person name="Fewell G.A."/>
            <person name="Delehaunty K.D."/>
            <person name="Miner T.L."/>
            <person name="Nash W.E."/>
            <person name="Kremitzki C."/>
            <person name="Oddy L."/>
            <person name="Du H."/>
            <person name="Sun H."/>
            <person name="Bradshaw-Cordum H."/>
            <person name="Ali J."/>
            <person name="Carter J."/>
            <person name="Cordes M."/>
            <person name="Harris A."/>
            <person name="Isak A."/>
            <person name="van Brunt A."/>
            <person name="Nguyen C."/>
            <person name="Du F."/>
            <person name="Courtney L."/>
            <person name="Kalicki J."/>
            <person name="Ozersky P."/>
            <person name="Abbott S."/>
            <person name="Armstrong J."/>
            <person name="Belter E.A."/>
            <person name="Caruso L."/>
            <person name="Cedroni M."/>
            <person name="Cotton M."/>
            <person name="Davidson T."/>
            <person name="Desai A."/>
            <person name="Elliott G."/>
            <person name="Erb T."/>
            <person name="Fronick C."/>
            <person name="Gaige T."/>
            <person name="Haakenson W."/>
            <person name="Haglund K."/>
            <person name="Holmes A."/>
            <person name="Harkins R."/>
            <person name="Kim K."/>
            <person name="Kruchowski S.S."/>
            <person name="Strong C.M."/>
            <person name="Grewal N."/>
            <person name="Goyea E."/>
            <person name="Hou S."/>
            <person name="Levy A."/>
            <person name="Martinka S."/>
            <person name="Mead K."/>
            <person name="McLellan M.D."/>
            <person name="Meyer R."/>
            <person name="Randall-Maher J."/>
            <person name="Tomlinson C."/>
            <person name="Dauphin-Kohlberg S."/>
            <person name="Kozlowicz-Reilly A."/>
            <person name="Shah N."/>
            <person name="Swearengen-Shahid S."/>
            <person name="Snider J."/>
            <person name="Strong J.T."/>
            <person name="Thompson J."/>
            <person name="Yoakum M."/>
            <person name="Leonard S."/>
            <person name="Pearman C."/>
            <person name="Trani L."/>
            <person name="Radionenko M."/>
            <person name="Waligorski J.E."/>
            <person name="Wang C."/>
            <person name="Rock S.M."/>
            <person name="Tin-Wollam A.-M."/>
            <person name="Maupin R."/>
            <person name="Latreille P."/>
            <person name="Wendl M.C."/>
            <person name="Yang S.-P."/>
            <person name="Pohl C."/>
            <person name="Wallis J.W."/>
            <person name="Spieth J."/>
            <person name="Bieri T.A."/>
            <person name="Berkowicz N."/>
            <person name="Nelson J.O."/>
            <person name="Osborne J."/>
            <person name="Ding L."/>
            <person name="Meyer R."/>
            <person name="Sabo A."/>
            <person name="Shotland Y."/>
            <person name="Sinha P."/>
            <person name="Wohldmann P.E."/>
            <person name="Cook L.L."/>
            <person name="Hickenbotham M.T."/>
            <person name="Eldred J."/>
            <person name="Williams D."/>
            <person name="Jones T.A."/>
            <person name="She X."/>
            <person name="Ciccarelli F.D."/>
            <person name="Izaurralde E."/>
            <person name="Taylor J."/>
            <person name="Schmutz J."/>
            <person name="Myers R.M."/>
            <person name="Cox D.R."/>
            <person name="Huang X."/>
            <person name="McPherson J.D."/>
            <person name="Mardis E.R."/>
            <person name="Clifton S.W."/>
            <person name="Warren W.C."/>
            <person name="Chinwalla A.T."/>
            <person name="Eddy S.R."/>
            <person name="Marra M.A."/>
            <person name="Ovcharenko I."/>
            <person name="Furey T.S."/>
            <person name="Miller W."/>
            <person name="Eichler E.E."/>
            <person name="Bork P."/>
            <person name="Suyama M."/>
            <person name="Torrents D."/>
            <person name="Waterston R.H."/>
            <person name="Wilson R.K."/>
        </authorList>
    </citation>
    <scope>NUCLEOTIDE SEQUENCE [LARGE SCALE GENOMIC DNA]</scope>
</reference>
<reference key="3">
    <citation type="journal article" date="2004" name="Genome Res.">
        <title>The status, quality, and expansion of the NIH full-length cDNA project: the Mammalian Gene Collection (MGC).</title>
        <authorList>
            <consortium name="The MGC Project Team"/>
        </authorList>
    </citation>
    <scope>NUCLEOTIDE SEQUENCE [LARGE SCALE MRNA]</scope>
    <scope>VARIANT ARG-533</scope>
    <source>
        <tissue>Eye</tissue>
    </source>
</reference>
<reference key="4">
    <citation type="journal article" date="1992" name="Nucleic Acids Res.">
        <title>A gene family of HMG-box transcription factors with homology to TCF-1.</title>
        <authorList>
            <person name="Castrop J."/>
            <person name="van Norren K."/>
            <person name="Clevers H.C."/>
        </authorList>
    </citation>
    <scope>NUCLEOTIDE SEQUENCE [GENOMIC DNA] OF 331-419</scope>
</reference>
<reference key="5">
    <citation type="journal article" date="1999" name="Am. J. Pathol.">
        <title>Restricted high level expression of Tcf-4 protein in intestinal and mammary gland epithelium.</title>
        <authorList>
            <person name="Barker N."/>
            <person name="Huls G."/>
            <person name="Korinek V."/>
            <person name="Clevers H."/>
        </authorList>
    </citation>
    <scope>TISSUE SPECIFICITY</scope>
</reference>
<reference key="6">
    <citation type="journal article" date="2009" name="Nucleic Acids Res.">
        <title>Dazap2 modulates transcription driven by the Wnt effector TCF-4.</title>
        <authorList>
            <person name="Lukas J."/>
            <person name="Mazna P."/>
            <person name="Valenta T."/>
            <person name="Doubravska L."/>
            <person name="Pospichalova V."/>
            <person name="Vojtechova M."/>
            <person name="Fafilek B."/>
            <person name="Ivanek R."/>
            <person name="Plachy J."/>
            <person name="Novak J."/>
            <person name="Korinek V."/>
        </authorList>
    </citation>
    <scope>INTERACTION WITH DAZAP2</scope>
</reference>
<reference key="7">
    <citation type="journal article" date="2006" name="Science">
        <title>The consensus coding sequences of human breast and colorectal cancers.</title>
        <authorList>
            <person name="Sjoeblom T."/>
            <person name="Jones S."/>
            <person name="Wood L.D."/>
            <person name="Parsons D.W."/>
            <person name="Lin J."/>
            <person name="Barber T.D."/>
            <person name="Mandelker D."/>
            <person name="Leary R.J."/>
            <person name="Ptak J."/>
            <person name="Silliman N."/>
            <person name="Szabo S."/>
            <person name="Buckhaults P."/>
            <person name="Farrell C."/>
            <person name="Meeh P."/>
            <person name="Markowitz S.D."/>
            <person name="Willis J."/>
            <person name="Dawson D."/>
            <person name="Willson J.K.V."/>
            <person name="Gazdar A.F."/>
            <person name="Hartigan J."/>
            <person name="Wu L."/>
            <person name="Liu C."/>
            <person name="Parmigiani G."/>
            <person name="Park B.H."/>
            <person name="Bachman K.E."/>
            <person name="Papadopoulos N."/>
            <person name="Vogelstein B."/>
            <person name="Kinzler K.W."/>
            <person name="Velculescu V.E."/>
        </authorList>
    </citation>
    <scope>VARIANT [LARGE SCALE ANALYSIS] ASN-147</scope>
</reference>
<keyword id="KW-0010">Activator</keyword>
<keyword id="KW-0238">DNA-binding</keyword>
<keyword id="KW-0539">Nucleus</keyword>
<keyword id="KW-1267">Proteomics identification</keyword>
<keyword id="KW-1185">Reference proteome</keyword>
<keyword id="KW-0678">Repressor</keyword>
<keyword id="KW-0804">Transcription</keyword>
<keyword id="KW-0805">Transcription regulation</keyword>
<keyword id="KW-0879">Wnt signaling pathway</keyword>
<name>TF7L1_HUMAN</name>
<dbReference type="EMBL" id="AB031046">
    <property type="protein sequence ID" value="BAB18185.1"/>
    <property type="molecule type" value="mRNA"/>
</dbReference>
<dbReference type="EMBL" id="AC011236">
    <property type="status" value="NOT_ANNOTATED_CDS"/>
    <property type="molecule type" value="Genomic_DNA"/>
</dbReference>
<dbReference type="EMBL" id="AC093162">
    <property type="protein sequence ID" value="AAY24094.1"/>
    <property type="molecule type" value="Genomic_DNA"/>
</dbReference>
<dbReference type="EMBL" id="BC058894">
    <property type="protein sequence ID" value="AAH58894.1"/>
    <property type="molecule type" value="mRNA"/>
</dbReference>
<dbReference type="EMBL" id="X62870">
    <property type="protein sequence ID" value="CAB91064.1"/>
    <property type="molecule type" value="Genomic_DNA"/>
</dbReference>
<dbReference type="CCDS" id="CCDS1971.1"/>
<dbReference type="PIR" id="S22806">
    <property type="entry name" value="S22806"/>
</dbReference>
<dbReference type="RefSeq" id="NP_112573.1">
    <property type="nucleotide sequence ID" value="NM_031283.3"/>
</dbReference>
<dbReference type="SMR" id="Q9HCS4"/>
<dbReference type="BioGRID" id="123642">
    <property type="interactions" value="11"/>
</dbReference>
<dbReference type="FunCoup" id="Q9HCS4">
    <property type="interactions" value="3747"/>
</dbReference>
<dbReference type="IntAct" id="Q9HCS4">
    <property type="interactions" value="2"/>
</dbReference>
<dbReference type="STRING" id="9606.ENSP00000282111"/>
<dbReference type="GlyGen" id="Q9HCS4">
    <property type="glycosylation" value="1 site"/>
</dbReference>
<dbReference type="iPTMnet" id="Q9HCS4"/>
<dbReference type="PhosphoSitePlus" id="Q9HCS4"/>
<dbReference type="SwissPalm" id="Q9HCS4"/>
<dbReference type="BioMuta" id="TCF7L1"/>
<dbReference type="DMDM" id="29337134"/>
<dbReference type="jPOST" id="Q9HCS4"/>
<dbReference type="MassIVE" id="Q9HCS4"/>
<dbReference type="PaxDb" id="9606-ENSP00000282111"/>
<dbReference type="PeptideAtlas" id="Q9HCS4"/>
<dbReference type="ProteomicsDB" id="81794"/>
<dbReference type="Pumba" id="Q9HCS4"/>
<dbReference type="Antibodypedia" id="31794">
    <property type="antibodies" value="161 antibodies from 35 providers"/>
</dbReference>
<dbReference type="DNASU" id="83439"/>
<dbReference type="Ensembl" id="ENST00000282111.4">
    <property type="protein sequence ID" value="ENSP00000282111.3"/>
    <property type="gene ID" value="ENSG00000152284.5"/>
</dbReference>
<dbReference type="Ensembl" id="ENST00000709854.1">
    <property type="protein sequence ID" value="ENSP00000517899.1"/>
    <property type="gene ID" value="ENSG00000292149.1"/>
</dbReference>
<dbReference type="GeneID" id="83439"/>
<dbReference type="KEGG" id="hsa:83439"/>
<dbReference type="MANE-Select" id="ENST00000282111.4">
    <property type="protein sequence ID" value="ENSP00000282111.3"/>
    <property type="RefSeq nucleotide sequence ID" value="NM_031283.3"/>
    <property type="RefSeq protein sequence ID" value="NP_112573.1"/>
</dbReference>
<dbReference type="UCSC" id="uc002soy.4">
    <property type="organism name" value="human"/>
</dbReference>
<dbReference type="AGR" id="HGNC:11640"/>
<dbReference type="CTD" id="83439"/>
<dbReference type="DisGeNET" id="83439"/>
<dbReference type="GeneCards" id="TCF7L1"/>
<dbReference type="HGNC" id="HGNC:11640">
    <property type="gene designation" value="TCF7L1"/>
</dbReference>
<dbReference type="HPA" id="ENSG00000152284">
    <property type="expression patterns" value="Low tissue specificity"/>
</dbReference>
<dbReference type="MalaCards" id="TCF7L1"/>
<dbReference type="MIM" id="604652">
    <property type="type" value="gene"/>
</dbReference>
<dbReference type="neXtProt" id="NX_Q9HCS4"/>
<dbReference type="OpenTargets" id="ENSG00000152284"/>
<dbReference type="PharmGKB" id="PA36393"/>
<dbReference type="VEuPathDB" id="HostDB:ENSG00000152284"/>
<dbReference type="eggNOG" id="KOG3248">
    <property type="taxonomic scope" value="Eukaryota"/>
</dbReference>
<dbReference type="GeneTree" id="ENSGT00940000157038"/>
<dbReference type="HOGENOM" id="CLU_013229_4_1_1"/>
<dbReference type="InParanoid" id="Q9HCS4"/>
<dbReference type="OMA" id="HPLSWLV"/>
<dbReference type="OrthoDB" id="2307332at2759"/>
<dbReference type="PAN-GO" id="Q9HCS4">
    <property type="GO annotations" value="5 GO annotations based on evolutionary models"/>
</dbReference>
<dbReference type="PhylomeDB" id="Q9HCS4"/>
<dbReference type="TreeFam" id="TF318448"/>
<dbReference type="PathwayCommons" id="Q9HCS4"/>
<dbReference type="Reactome" id="R-HSA-201722">
    <property type="pathway name" value="Formation of the beta-catenin:TCF transactivating complex"/>
</dbReference>
<dbReference type="Reactome" id="R-HSA-3769402">
    <property type="pathway name" value="Deactivation of the beta-catenin transactivating complex"/>
</dbReference>
<dbReference type="Reactome" id="R-HSA-4086398">
    <property type="pathway name" value="Ca2+ pathway"/>
</dbReference>
<dbReference type="Reactome" id="R-HSA-4411364">
    <property type="pathway name" value="Binding of TCF/LEF:CTNNB1 to target gene promoters"/>
</dbReference>
<dbReference type="Reactome" id="R-HSA-4641265">
    <property type="pathway name" value="Repression of WNT target genes"/>
</dbReference>
<dbReference type="Reactome" id="R-HSA-8951430">
    <property type="pathway name" value="RUNX3 regulates WNT signaling"/>
</dbReference>
<dbReference type="Reactome" id="R-HSA-9825892">
    <property type="pathway name" value="Regulation of MITF-M-dependent genes involved in cell cycle and proliferation"/>
</dbReference>
<dbReference type="Reactome" id="R-HSA-9834899">
    <property type="pathway name" value="Specification of the neural plate border"/>
</dbReference>
<dbReference type="SignaLink" id="Q9HCS4"/>
<dbReference type="SIGNOR" id="Q9HCS4"/>
<dbReference type="BioGRID-ORCS" id="83439">
    <property type="hits" value="23 hits in 1174 CRISPR screens"/>
</dbReference>
<dbReference type="ChiTaRS" id="TCF7L1">
    <property type="organism name" value="human"/>
</dbReference>
<dbReference type="GeneWiki" id="TCF7L1"/>
<dbReference type="GenomeRNAi" id="83439"/>
<dbReference type="Pharos" id="Q9HCS4">
    <property type="development level" value="Tbio"/>
</dbReference>
<dbReference type="PRO" id="PR:Q9HCS4"/>
<dbReference type="Proteomes" id="UP000005640">
    <property type="component" value="Chromosome 2"/>
</dbReference>
<dbReference type="RNAct" id="Q9HCS4">
    <property type="molecule type" value="protein"/>
</dbReference>
<dbReference type="Bgee" id="ENSG00000152284">
    <property type="expression patterns" value="Expressed in popliteal artery and 153 other cell types or tissues"/>
</dbReference>
<dbReference type="ExpressionAtlas" id="Q9HCS4">
    <property type="expression patterns" value="baseline and differential"/>
</dbReference>
<dbReference type="GO" id="GO:1990907">
    <property type="term" value="C:beta-catenin-TCF complex"/>
    <property type="evidence" value="ECO:0000318"/>
    <property type="project" value="GO_Central"/>
</dbReference>
<dbReference type="GO" id="GO:0000785">
    <property type="term" value="C:chromatin"/>
    <property type="evidence" value="ECO:0000318"/>
    <property type="project" value="GO_Central"/>
</dbReference>
<dbReference type="GO" id="GO:0005829">
    <property type="term" value="C:cytosol"/>
    <property type="evidence" value="ECO:0000314"/>
    <property type="project" value="HPA"/>
</dbReference>
<dbReference type="GO" id="GO:0005654">
    <property type="term" value="C:nucleoplasm"/>
    <property type="evidence" value="ECO:0000314"/>
    <property type="project" value="HPA"/>
</dbReference>
<dbReference type="GO" id="GO:0005634">
    <property type="term" value="C:nucleus"/>
    <property type="evidence" value="ECO:0000303"/>
    <property type="project" value="UniProtKB"/>
</dbReference>
<dbReference type="GO" id="GO:0003677">
    <property type="term" value="F:DNA binding"/>
    <property type="evidence" value="ECO:0000303"/>
    <property type="project" value="UniProtKB"/>
</dbReference>
<dbReference type="GO" id="GO:0003700">
    <property type="term" value="F:DNA-binding transcription factor activity"/>
    <property type="evidence" value="ECO:0000303"/>
    <property type="project" value="UniProtKB"/>
</dbReference>
<dbReference type="GO" id="GO:0000981">
    <property type="term" value="F:DNA-binding transcription factor activity, RNA polymerase II-specific"/>
    <property type="evidence" value="ECO:0000318"/>
    <property type="project" value="GO_Central"/>
</dbReference>
<dbReference type="GO" id="GO:0000978">
    <property type="term" value="F:RNA polymerase II cis-regulatory region sequence-specific DNA binding"/>
    <property type="evidence" value="ECO:0000318"/>
    <property type="project" value="GO_Central"/>
</dbReference>
<dbReference type="GO" id="GO:1990837">
    <property type="term" value="F:sequence-specific double-stranded DNA binding"/>
    <property type="evidence" value="ECO:0000314"/>
    <property type="project" value="ARUK-UCL"/>
</dbReference>
<dbReference type="GO" id="GO:0060070">
    <property type="term" value="P:canonical Wnt signaling pathway"/>
    <property type="evidence" value="ECO:0000318"/>
    <property type="project" value="GO_Central"/>
</dbReference>
<dbReference type="GO" id="GO:0006325">
    <property type="term" value="P:chromatin organization"/>
    <property type="evidence" value="ECO:0000303"/>
    <property type="project" value="UniProtKB"/>
</dbReference>
<dbReference type="GO" id="GO:0006355">
    <property type="term" value="P:regulation of DNA-templated transcription"/>
    <property type="evidence" value="ECO:0000303"/>
    <property type="project" value="UniProtKB"/>
</dbReference>
<dbReference type="GO" id="GO:0006357">
    <property type="term" value="P:regulation of transcription by RNA polymerase II"/>
    <property type="evidence" value="ECO:0000318"/>
    <property type="project" value="GO_Central"/>
</dbReference>
<dbReference type="GO" id="GO:0030111">
    <property type="term" value="P:regulation of Wnt signaling pathway"/>
    <property type="evidence" value="ECO:0000303"/>
    <property type="project" value="UniProtKB"/>
</dbReference>
<dbReference type="CDD" id="cd21996">
    <property type="entry name" value="HMG-box_TCF7-like"/>
    <property type="match status" value="1"/>
</dbReference>
<dbReference type="FunFam" id="1.10.30.10:FF:000001">
    <property type="entry name" value="transcription factor 7 isoform X2"/>
    <property type="match status" value="1"/>
</dbReference>
<dbReference type="FunFam" id="4.10.900.10:FF:000017">
    <property type="entry name" value="Transcription factor 7 like 1"/>
    <property type="match status" value="1"/>
</dbReference>
<dbReference type="Gene3D" id="1.10.30.10">
    <property type="entry name" value="High mobility group box domain"/>
    <property type="match status" value="1"/>
</dbReference>
<dbReference type="Gene3D" id="4.10.900.10">
    <property type="entry name" value="TCF3-CBD (Catenin binding domain)"/>
    <property type="match status" value="1"/>
</dbReference>
<dbReference type="InterPro" id="IPR027397">
    <property type="entry name" value="Catenin-bd_sf"/>
</dbReference>
<dbReference type="InterPro" id="IPR013558">
    <property type="entry name" value="CTNNB1-bd_N"/>
</dbReference>
<dbReference type="InterPro" id="IPR009071">
    <property type="entry name" value="HMG_box_dom"/>
</dbReference>
<dbReference type="InterPro" id="IPR036910">
    <property type="entry name" value="HMG_box_dom_sf"/>
</dbReference>
<dbReference type="InterPro" id="IPR024940">
    <property type="entry name" value="TCF/LEF"/>
</dbReference>
<dbReference type="PANTHER" id="PTHR10373">
    <property type="entry name" value="TRANSCRIPTION FACTOR 7 FAMILY MEMBER"/>
    <property type="match status" value="1"/>
</dbReference>
<dbReference type="PANTHER" id="PTHR10373:SF25">
    <property type="entry name" value="TRANSCRIPTION FACTOR 7-LIKE 1"/>
    <property type="match status" value="1"/>
</dbReference>
<dbReference type="Pfam" id="PF08347">
    <property type="entry name" value="CTNNB1_binding"/>
    <property type="match status" value="1"/>
</dbReference>
<dbReference type="Pfam" id="PF00505">
    <property type="entry name" value="HMG_box"/>
    <property type="match status" value="1"/>
</dbReference>
<dbReference type="SMART" id="SM00398">
    <property type="entry name" value="HMG"/>
    <property type="match status" value="1"/>
</dbReference>
<dbReference type="SUPFAM" id="SSF47095">
    <property type="entry name" value="HMG-box"/>
    <property type="match status" value="1"/>
</dbReference>
<dbReference type="PROSITE" id="PS50118">
    <property type="entry name" value="HMG_BOX_2"/>
    <property type="match status" value="1"/>
</dbReference>
<proteinExistence type="evidence at protein level"/>
<comment type="function">
    <text evidence="1">Participates in the Wnt signaling pathway. Binds to DNA and acts as a repressor in the absence of CTNNB1, and as an activator in its presence. Necessary for the terminal differentiation of epidermal cells, the formation of keratohyalin granules and the development of the barrier function of the epidermis (By similarity). Down-regulates NQO1, leading to increased mitomycin c resistance.</text>
</comment>
<comment type="subunit">
    <text evidence="2 8">Binds the armadillo repeat of CTNNB1 and forms a stable complex (By similarity). Interacts with DAZAP2 (PubMed:19304756).</text>
</comment>
<comment type="subcellular location">
    <subcellularLocation>
        <location>Nucleus</location>
    </subcellularLocation>
</comment>
<comment type="tissue specificity">
    <text evidence="9">Detected in hair follicles and skin keratinocytes, and at lower levels in stomach epithelium.</text>
</comment>
<comment type="domain">
    <text evidence="1">The putative Groucho interaction domain between the N-terminal CTNNB1 binding domain and the HMG-box is necessary for repression of the transactivation mediated by TCF7L1 and CTNNB1.</text>
</comment>
<comment type="similarity">
    <text evidence="10">Belongs to the TCF/LEF family.</text>
</comment>
<evidence type="ECO:0000250" key="1"/>
<evidence type="ECO:0000250" key="2">
    <source>
        <dbReference type="UniProtKB" id="Q9Z1J1"/>
    </source>
</evidence>
<evidence type="ECO:0000255" key="3"/>
<evidence type="ECO:0000255" key="4">
    <source>
        <dbReference type="PROSITE-ProRule" id="PRU00267"/>
    </source>
</evidence>
<evidence type="ECO:0000256" key="5">
    <source>
        <dbReference type="SAM" id="MobiDB-lite"/>
    </source>
</evidence>
<evidence type="ECO:0000269" key="6">
    <source>
    </source>
</evidence>
<evidence type="ECO:0000269" key="7">
    <source>
    </source>
</evidence>
<evidence type="ECO:0000269" key="8">
    <source>
    </source>
</evidence>
<evidence type="ECO:0000269" key="9">
    <source>
    </source>
</evidence>
<evidence type="ECO:0000305" key="10"/>
<feature type="chain" id="PRO_0000048614" description="Transcription factor 7-like 1">
    <location>
        <begin position="1"/>
        <end position="588"/>
    </location>
</feature>
<feature type="DNA-binding region" description="HMG box" evidence="4">
    <location>
        <begin position="346"/>
        <end position="414"/>
    </location>
</feature>
<feature type="region of interest" description="Disordered" evidence="5">
    <location>
        <begin position="1"/>
        <end position="101"/>
    </location>
</feature>
<feature type="region of interest" description="CTNNB1-binding" evidence="1">
    <location>
        <begin position="1"/>
        <end position="74"/>
    </location>
</feature>
<feature type="region of interest" description="Disordered" evidence="5">
    <location>
        <begin position="203"/>
        <end position="234"/>
    </location>
</feature>
<feature type="region of interest" description="Disordered" evidence="5">
    <location>
        <begin position="409"/>
        <end position="506"/>
    </location>
</feature>
<feature type="short sequence motif" description="Nuclear localization signal" evidence="3">
    <location>
        <begin position="421"/>
        <end position="427"/>
    </location>
</feature>
<feature type="compositionally biased region" description="Gly residues" evidence="5">
    <location>
        <begin position="1"/>
        <end position="31"/>
    </location>
</feature>
<feature type="compositionally biased region" description="Low complexity" evidence="5">
    <location>
        <begin position="67"/>
        <end position="81"/>
    </location>
</feature>
<feature type="compositionally biased region" description="Basic and acidic residues" evidence="5">
    <location>
        <begin position="83"/>
        <end position="101"/>
    </location>
</feature>
<feature type="compositionally biased region" description="Low complexity" evidence="5">
    <location>
        <begin position="431"/>
        <end position="441"/>
    </location>
</feature>
<feature type="compositionally biased region" description="Low complexity" evidence="5">
    <location>
        <begin position="478"/>
        <end position="497"/>
    </location>
</feature>
<feature type="sequence variant" id="VAR_035938" description="In a breast cancer sample; somatic mutation." evidence="7">
    <original>T</original>
    <variation>N</variation>
    <location>
        <position position="147"/>
    </location>
</feature>
<feature type="sequence variant" id="VAR_049561" description="In dbSNP:rs11547160." evidence="6">
    <original>G</original>
    <variation>R</variation>
    <location>
        <position position="533"/>
    </location>
</feature>
<feature type="sequence conflict" description="In Ref. 3; AAH58894." evidence="10" ref="3">
    <location>
        <position position="14"/>
    </location>
</feature>
<accession>Q9HCS4</accession>
<accession>Q53R97</accession>
<accession>Q6PD70</accession>
<accession>Q9NP00</accession>
<gene>
    <name type="primary">TCF7L1</name>
    <name type="synonym">TCF3</name>
</gene>
<sequence length="588" mass="62631">MPQLGGGGGGGGGGSGGGGGSSAGAAGGGDDLGANDELIPFQDEGGEEQEPSSDSASAQRDLDEVKSSLVNESENQSSSSDSEAERRPQPVRDTFQKPRDYFAEVRRPQDSAFFKGPPYPGYPFLMIPDLSSPYLSNGPLSPGGARTYLQMKWPLLDVPSSATVKDTRSPSPAHLSNKVPVVQHPHHMHPLTPLITYSNDHFSPGSPPTHLSPEIDPKTGIPRPPHPSELSPYYPLSPGAVGQIPHPLGWLVPQQGQPMYSLPPGGFRHPYPALAMNASMSSLVSSRFSPHMVAPAHPGLPTSGIPHPAIVSPIVKQEPAPPSLSPAVSVKSPVTVKKEEEKKPHVKKPLNAFMLYMKEMRAKVVAECTLKESAAINQILGRKWHNLSREEQAKYYELARKERQLHSQLYPTWSARDNYGKKKKRKREKQLSQTQSQQQVQEAEGALASKSKKPCVQYLPPEKPCDSPASSHGSMLDSPATPSAALASPAAPAATHSEQAQPLSLTTKPETRAQLALHSAAFLSAKAAASSSGQMGSQPPLLSRPLPLGSMPTALLASPPSFPATLHAHQALPVLQAQPLSLVTKSAH</sequence>
<protein>
    <recommendedName>
        <fullName>Transcription factor 7-like 1</fullName>
    </recommendedName>
    <alternativeName>
        <fullName>HMG box transcription factor 3</fullName>
        <shortName>TCF-3</shortName>
    </alternativeName>
</protein>
<organism>
    <name type="scientific">Homo sapiens</name>
    <name type="common">Human</name>
    <dbReference type="NCBI Taxonomy" id="9606"/>
    <lineage>
        <taxon>Eukaryota</taxon>
        <taxon>Metazoa</taxon>
        <taxon>Chordata</taxon>
        <taxon>Craniata</taxon>
        <taxon>Vertebrata</taxon>
        <taxon>Euteleostomi</taxon>
        <taxon>Mammalia</taxon>
        <taxon>Eutheria</taxon>
        <taxon>Euarchontoglires</taxon>
        <taxon>Primates</taxon>
        <taxon>Haplorrhini</taxon>
        <taxon>Catarrhini</taxon>
        <taxon>Hominidae</taxon>
        <taxon>Homo</taxon>
    </lineage>
</organism>